<accession>B7NW76</accession>
<evidence type="ECO:0000255" key="1">
    <source>
        <dbReference type="HAMAP-Rule" id="MF_01040"/>
    </source>
</evidence>
<reference key="1">
    <citation type="journal article" date="2009" name="PLoS Genet.">
        <title>Organised genome dynamics in the Escherichia coli species results in highly diverse adaptive paths.</title>
        <authorList>
            <person name="Touchon M."/>
            <person name="Hoede C."/>
            <person name="Tenaillon O."/>
            <person name="Barbe V."/>
            <person name="Baeriswyl S."/>
            <person name="Bidet P."/>
            <person name="Bingen E."/>
            <person name="Bonacorsi S."/>
            <person name="Bouchier C."/>
            <person name="Bouvet O."/>
            <person name="Calteau A."/>
            <person name="Chiapello H."/>
            <person name="Clermont O."/>
            <person name="Cruveiller S."/>
            <person name="Danchin A."/>
            <person name="Diard M."/>
            <person name="Dossat C."/>
            <person name="Karoui M.E."/>
            <person name="Frapy E."/>
            <person name="Garry L."/>
            <person name="Ghigo J.M."/>
            <person name="Gilles A.M."/>
            <person name="Johnson J."/>
            <person name="Le Bouguenec C."/>
            <person name="Lescat M."/>
            <person name="Mangenot S."/>
            <person name="Martinez-Jehanne V."/>
            <person name="Matic I."/>
            <person name="Nassif X."/>
            <person name="Oztas S."/>
            <person name="Petit M.A."/>
            <person name="Pichon C."/>
            <person name="Rouy Z."/>
            <person name="Ruf C.S."/>
            <person name="Schneider D."/>
            <person name="Tourret J."/>
            <person name="Vacherie B."/>
            <person name="Vallenet D."/>
            <person name="Medigue C."/>
            <person name="Rocha E.P.C."/>
            <person name="Denamur E."/>
        </authorList>
    </citation>
    <scope>NUCLEOTIDE SEQUENCE [LARGE SCALE GENOMIC DNA]</scope>
    <source>
        <strain>IAI39 / ExPEC</strain>
    </source>
</reference>
<name>GPMB_ECO7I</name>
<comment type="catalytic activity">
    <reaction evidence="1">
        <text>(2R)-2-phosphoglycerate = (2R)-3-phosphoglycerate</text>
        <dbReference type="Rhea" id="RHEA:15901"/>
        <dbReference type="ChEBI" id="CHEBI:58272"/>
        <dbReference type="ChEBI" id="CHEBI:58289"/>
    </reaction>
</comment>
<comment type="pathway">
    <text evidence="1">Carbohydrate degradation; glycolysis; pyruvate from D-glyceraldehyde 3-phosphate: step 3/5.</text>
</comment>
<comment type="similarity">
    <text evidence="1">Belongs to the phosphoglycerate mutase family. GpmB subfamily.</text>
</comment>
<gene>
    <name evidence="1" type="primary">gpmB</name>
    <name type="ordered locus">ECIAI39_4928</name>
</gene>
<proteinExistence type="inferred from homology"/>
<sequence>MLQVYLVRHGETQWNAERRIQGQSDSPLTAKGEQQAMQVATRAKELGITHIISSDLGRTRRTAEIIAQACGCDIIFDSRLRELNMGVLETRNIDSLTEEEENWRRQLVNGTVDGRIPEGESMQELSDRVNAALESCRDLPQGSRPLLVSHGIALGCLVSTILGLPAWAERRLRLRNCSISRVDYQESLWLASGWVVETAGDISHLDAPALDELQR</sequence>
<feature type="chain" id="PRO_1000136001" description="Probable phosphoglycerate mutase GpmB">
    <location>
        <begin position="1"/>
        <end position="215"/>
    </location>
</feature>
<feature type="active site" description="Tele-phosphohistidine intermediate" evidence="1">
    <location>
        <position position="9"/>
    </location>
</feature>
<feature type="active site" description="Proton donor/acceptor" evidence="1">
    <location>
        <position position="82"/>
    </location>
</feature>
<feature type="binding site" evidence="1">
    <location>
        <begin position="8"/>
        <end position="15"/>
    </location>
    <ligand>
        <name>substrate</name>
    </ligand>
</feature>
<feature type="binding site" evidence="1">
    <location>
        <begin position="21"/>
        <end position="22"/>
    </location>
    <ligand>
        <name>substrate</name>
    </ligand>
</feature>
<feature type="binding site" evidence="1">
    <location>
        <position position="58"/>
    </location>
    <ligand>
        <name>substrate</name>
    </ligand>
</feature>
<feature type="binding site" evidence="1">
    <location>
        <position position="60"/>
    </location>
    <ligand>
        <name>substrate</name>
    </ligand>
</feature>
<feature type="binding site" evidence="1">
    <location>
        <begin position="82"/>
        <end position="85"/>
    </location>
    <ligand>
        <name>substrate</name>
    </ligand>
</feature>
<feature type="binding site" evidence="1">
    <location>
        <begin position="104"/>
        <end position="105"/>
    </location>
    <ligand>
        <name>substrate</name>
    </ligand>
</feature>
<feature type="binding site" evidence="1">
    <location>
        <begin position="151"/>
        <end position="152"/>
    </location>
    <ligand>
        <name>substrate</name>
    </ligand>
</feature>
<feature type="site" description="Transition state stabilizer" evidence="1">
    <location>
        <position position="150"/>
    </location>
</feature>
<protein>
    <recommendedName>
        <fullName evidence="1">Probable phosphoglycerate mutase GpmB</fullName>
        <ecNumber evidence="1">5.4.2.-</ecNumber>
    </recommendedName>
    <alternativeName>
        <fullName evidence="1">PGAM</fullName>
    </alternativeName>
    <alternativeName>
        <fullName evidence="1">Phosphoglyceromutase</fullName>
    </alternativeName>
</protein>
<keyword id="KW-0324">Glycolysis</keyword>
<keyword id="KW-0413">Isomerase</keyword>
<organism>
    <name type="scientific">Escherichia coli O7:K1 (strain IAI39 / ExPEC)</name>
    <dbReference type="NCBI Taxonomy" id="585057"/>
    <lineage>
        <taxon>Bacteria</taxon>
        <taxon>Pseudomonadati</taxon>
        <taxon>Pseudomonadota</taxon>
        <taxon>Gammaproteobacteria</taxon>
        <taxon>Enterobacterales</taxon>
        <taxon>Enterobacteriaceae</taxon>
        <taxon>Escherichia</taxon>
    </lineage>
</organism>
<dbReference type="EC" id="5.4.2.-" evidence="1"/>
<dbReference type="EMBL" id="CU928164">
    <property type="protein sequence ID" value="CAR21024.1"/>
    <property type="molecule type" value="Genomic_DNA"/>
</dbReference>
<dbReference type="RefSeq" id="WP_000942350.1">
    <property type="nucleotide sequence ID" value="NC_011750.1"/>
</dbReference>
<dbReference type="RefSeq" id="YP_002410773.1">
    <property type="nucleotide sequence ID" value="NC_011750.1"/>
</dbReference>
<dbReference type="SMR" id="B7NW76"/>
<dbReference type="STRING" id="585057.ECIAI39_4928"/>
<dbReference type="KEGG" id="ect:ECIAI39_4928"/>
<dbReference type="PATRIC" id="fig|585057.6.peg.5091"/>
<dbReference type="HOGENOM" id="CLU_033323_9_5_6"/>
<dbReference type="UniPathway" id="UPA00109">
    <property type="reaction ID" value="UER00186"/>
</dbReference>
<dbReference type="Proteomes" id="UP000000749">
    <property type="component" value="Chromosome"/>
</dbReference>
<dbReference type="GO" id="GO:0005737">
    <property type="term" value="C:cytoplasm"/>
    <property type="evidence" value="ECO:0007669"/>
    <property type="project" value="TreeGrafter"/>
</dbReference>
<dbReference type="GO" id="GO:0016791">
    <property type="term" value="F:phosphatase activity"/>
    <property type="evidence" value="ECO:0007669"/>
    <property type="project" value="TreeGrafter"/>
</dbReference>
<dbReference type="GO" id="GO:0004619">
    <property type="term" value="F:phosphoglycerate mutase activity"/>
    <property type="evidence" value="ECO:0007669"/>
    <property type="project" value="UniProtKB-UniRule"/>
</dbReference>
<dbReference type="GO" id="GO:0006096">
    <property type="term" value="P:glycolytic process"/>
    <property type="evidence" value="ECO:0007669"/>
    <property type="project" value="UniProtKB-UniRule"/>
</dbReference>
<dbReference type="CDD" id="cd07067">
    <property type="entry name" value="HP_PGM_like"/>
    <property type="match status" value="1"/>
</dbReference>
<dbReference type="Gene3D" id="3.40.50.1240">
    <property type="entry name" value="Phosphoglycerate mutase-like"/>
    <property type="match status" value="1"/>
</dbReference>
<dbReference type="HAMAP" id="MF_01040">
    <property type="entry name" value="PGAM_GpmB"/>
    <property type="match status" value="1"/>
</dbReference>
<dbReference type="InterPro" id="IPR013078">
    <property type="entry name" value="His_Pase_superF_clade-1"/>
</dbReference>
<dbReference type="InterPro" id="IPR029033">
    <property type="entry name" value="His_PPase_superfam"/>
</dbReference>
<dbReference type="InterPro" id="IPR001345">
    <property type="entry name" value="PG/BPGM_mutase_AS"/>
</dbReference>
<dbReference type="InterPro" id="IPR050275">
    <property type="entry name" value="PGM_Phosphatase"/>
</dbReference>
<dbReference type="InterPro" id="IPR023086">
    <property type="entry name" value="Phosphoglycerate_mutase_GpmB"/>
</dbReference>
<dbReference type="NCBIfam" id="NF002901">
    <property type="entry name" value="PRK03482.1"/>
    <property type="match status" value="1"/>
</dbReference>
<dbReference type="PANTHER" id="PTHR48100">
    <property type="entry name" value="BROAD-SPECIFICITY PHOSPHATASE YOR283W-RELATED"/>
    <property type="match status" value="1"/>
</dbReference>
<dbReference type="PANTHER" id="PTHR48100:SF1">
    <property type="entry name" value="HISTIDINE PHOSPHATASE FAMILY PROTEIN-RELATED"/>
    <property type="match status" value="1"/>
</dbReference>
<dbReference type="Pfam" id="PF00300">
    <property type="entry name" value="His_Phos_1"/>
    <property type="match status" value="1"/>
</dbReference>
<dbReference type="SMART" id="SM00855">
    <property type="entry name" value="PGAM"/>
    <property type="match status" value="1"/>
</dbReference>
<dbReference type="SUPFAM" id="SSF53254">
    <property type="entry name" value="Phosphoglycerate mutase-like"/>
    <property type="match status" value="1"/>
</dbReference>
<dbReference type="PROSITE" id="PS00175">
    <property type="entry name" value="PG_MUTASE"/>
    <property type="match status" value="1"/>
</dbReference>